<gene>
    <name evidence="1" type="primary">rpsS</name>
    <name type="ordered locus">Sala_2814</name>
</gene>
<sequence length="91" mass="10137">MARSVWKGPFVDLHLLKKAETAQEGGSTAPIKTWSRRSTILPQFVGLTFNVYNGRKFVPVSVNEDMVGMKLGEFAPTRFFPGHAADKKGKR</sequence>
<reference key="1">
    <citation type="journal article" date="2009" name="Proc. Natl. Acad. Sci. U.S.A.">
        <title>The genomic basis of trophic strategy in marine bacteria.</title>
        <authorList>
            <person name="Lauro F.M."/>
            <person name="McDougald D."/>
            <person name="Thomas T."/>
            <person name="Williams T.J."/>
            <person name="Egan S."/>
            <person name="Rice S."/>
            <person name="DeMaere M.Z."/>
            <person name="Ting L."/>
            <person name="Ertan H."/>
            <person name="Johnson J."/>
            <person name="Ferriera S."/>
            <person name="Lapidus A."/>
            <person name="Anderson I."/>
            <person name="Kyrpides N."/>
            <person name="Munk A.C."/>
            <person name="Detter C."/>
            <person name="Han C.S."/>
            <person name="Brown M.V."/>
            <person name="Robb F.T."/>
            <person name="Kjelleberg S."/>
            <person name="Cavicchioli R."/>
        </authorList>
    </citation>
    <scope>NUCLEOTIDE SEQUENCE [LARGE SCALE GENOMIC DNA]</scope>
    <source>
        <strain>DSM 13593 / LMG 18877 / RB2256</strain>
    </source>
</reference>
<dbReference type="EMBL" id="CP000356">
    <property type="protein sequence ID" value="ABF54519.1"/>
    <property type="molecule type" value="Genomic_DNA"/>
</dbReference>
<dbReference type="RefSeq" id="WP_011543084.1">
    <property type="nucleotide sequence ID" value="NC_008048.1"/>
</dbReference>
<dbReference type="SMR" id="Q1GPA3"/>
<dbReference type="STRING" id="317655.Sala_2814"/>
<dbReference type="KEGG" id="sal:Sala_2814"/>
<dbReference type="eggNOG" id="COG0185">
    <property type="taxonomic scope" value="Bacteria"/>
</dbReference>
<dbReference type="HOGENOM" id="CLU_144911_0_1_5"/>
<dbReference type="OrthoDB" id="9797833at2"/>
<dbReference type="Proteomes" id="UP000006578">
    <property type="component" value="Chromosome"/>
</dbReference>
<dbReference type="GO" id="GO:0005737">
    <property type="term" value="C:cytoplasm"/>
    <property type="evidence" value="ECO:0007669"/>
    <property type="project" value="UniProtKB-ARBA"/>
</dbReference>
<dbReference type="GO" id="GO:0015935">
    <property type="term" value="C:small ribosomal subunit"/>
    <property type="evidence" value="ECO:0007669"/>
    <property type="project" value="InterPro"/>
</dbReference>
<dbReference type="GO" id="GO:0019843">
    <property type="term" value="F:rRNA binding"/>
    <property type="evidence" value="ECO:0007669"/>
    <property type="project" value="UniProtKB-UniRule"/>
</dbReference>
<dbReference type="GO" id="GO:0003735">
    <property type="term" value="F:structural constituent of ribosome"/>
    <property type="evidence" value="ECO:0007669"/>
    <property type="project" value="InterPro"/>
</dbReference>
<dbReference type="GO" id="GO:0000028">
    <property type="term" value="P:ribosomal small subunit assembly"/>
    <property type="evidence" value="ECO:0007669"/>
    <property type="project" value="TreeGrafter"/>
</dbReference>
<dbReference type="GO" id="GO:0006412">
    <property type="term" value="P:translation"/>
    <property type="evidence" value="ECO:0007669"/>
    <property type="project" value="UniProtKB-UniRule"/>
</dbReference>
<dbReference type="FunFam" id="3.30.860.10:FF:000001">
    <property type="entry name" value="30S ribosomal protein S19"/>
    <property type="match status" value="1"/>
</dbReference>
<dbReference type="Gene3D" id="3.30.860.10">
    <property type="entry name" value="30s Ribosomal Protein S19, Chain A"/>
    <property type="match status" value="1"/>
</dbReference>
<dbReference type="HAMAP" id="MF_00531">
    <property type="entry name" value="Ribosomal_uS19"/>
    <property type="match status" value="1"/>
</dbReference>
<dbReference type="InterPro" id="IPR002222">
    <property type="entry name" value="Ribosomal_uS19"/>
</dbReference>
<dbReference type="InterPro" id="IPR005732">
    <property type="entry name" value="Ribosomal_uS19_bac-type"/>
</dbReference>
<dbReference type="InterPro" id="IPR020934">
    <property type="entry name" value="Ribosomal_uS19_CS"/>
</dbReference>
<dbReference type="InterPro" id="IPR023575">
    <property type="entry name" value="Ribosomal_uS19_SF"/>
</dbReference>
<dbReference type="NCBIfam" id="TIGR01050">
    <property type="entry name" value="rpsS_bact"/>
    <property type="match status" value="1"/>
</dbReference>
<dbReference type="PANTHER" id="PTHR11880">
    <property type="entry name" value="RIBOSOMAL PROTEIN S19P FAMILY MEMBER"/>
    <property type="match status" value="1"/>
</dbReference>
<dbReference type="PANTHER" id="PTHR11880:SF8">
    <property type="entry name" value="SMALL RIBOSOMAL SUBUNIT PROTEIN US19M"/>
    <property type="match status" value="1"/>
</dbReference>
<dbReference type="Pfam" id="PF00203">
    <property type="entry name" value="Ribosomal_S19"/>
    <property type="match status" value="1"/>
</dbReference>
<dbReference type="PIRSF" id="PIRSF002144">
    <property type="entry name" value="Ribosomal_S19"/>
    <property type="match status" value="1"/>
</dbReference>
<dbReference type="PRINTS" id="PR00975">
    <property type="entry name" value="RIBOSOMALS19"/>
</dbReference>
<dbReference type="SUPFAM" id="SSF54570">
    <property type="entry name" value="Ribosomal protein S19"/>
    <property type="match status" value="1"/>
</dbReference>
<dbReference type="PROSITE" id="PS00323">
    <property type="entry name" value="RIBOSOMAL_S19"/>
    <property type="match status" value="1"/>
</dbReference>
<keyword id="KW-1185">Reference proteome</keyword>
<keyword id="KW-0687">Ribonucleoprotein</keyword>
<keyword id="KW-0689">Ribosomal protein</keyword>
<keyword id="KW-0694">RNA-binding</keyword>
<keyword id="KW-0699">rRNA-binding</keyword>
<accession>Q1GPA3</accession>
<comment type="function">
    <text evidence="1">Protein S19 forms a complex with S13 that binds strongly to the 16S ribosomal RNA.</text>
</comment>
<comment type="similarity">
    <text evidence="1">Belongs to the universal ribosomal protein uS19 family.</text>
</comment>
<organism>
    <name type="scientific">Sphingopyxis alaskensis (strain DSM 13593 / LMG 18877 / RB2256)</name>
    <name type="common">Sphingomonas alaskensis</name>
    <dbReference type="NCBI Taxonomy" id="317655"/>
    <lineage>
        <taxon>Bacteria</taxon>
        <taxon>Pseudomonadati</taxon>
        <taxon>Pseudomonadota</taxon>
        <taxon>Alphaproteobacteria</taxon>
        <taxon>Sphingomonadales</taxon>
        <taxon>Sphingomonadaceae</taxon>
        <taxon>Sphingopyxis</taxon>
    </lineage>
</organism>
<name>RS19_SPHAL</name>
<evidence type="ECO:0000255" key="1">
    <source>
        <dbReference type="HAMAP-Rule" id="MF_00531"/>
    </source>
</evidence>
<evidence type="ECO:0000305" key="2"/>
<feature type="chain" id="PRO_0000265437" description="Small ribosomal subunit protein uS19">
    <location>
        <begin position="1"/>
        <end position="91"/>
    </location>
</feature>
<protein>
    <recommendedName>
        <fullName evidence="1">Small ribosomal subunit protein uS19</fullName>
    </recommendedName>
    <alternativeName>
        <fullName evidence="2">30S ribosomal protein S19</fullName>
    </alternativeName>
</protein>
<proteinExistence type="inferred from homology"/>